<sequence>MADLSLLQEDLPEDADGLGVDDYSSESDVIIIPSALDFVSQDEMLTPLGRLDKYAASENVFNRQMVARSLLDTLREVCGEERDCIAVLERISRLADDSEPTVRAELMEQVPHIALFCQENRPSIPYAFSKYLLPIVVRYLADQNNQVRKTSQAALLALLEQELIERLDVETKVCPVLIDLTAPDSNDDVKTEAVAIMCKMAPMVGKDITERLILPRFCEMCCDCRMFHVRKVCAANFGDICSVVGQQATEEMLLPRFFQLCSDNVWGVRKACAECFMAVSCATCQEIRRTKLSALFINLISDPSRWVRQAAFQSLGPFISTFANPSSSGQCFKDESKSSEDKDRIRDDGVVQEEQSRPEDAPSDLSAPHSSARLDGTLEGCAAETPGDSAGDMRVPADSSLLCTLSSESPQEAASDAESGKKHDNNSKSASRPDVGTSSPEPTPLDQEMFNSFHFWRTPLPQIDLDKELQQDPGERPSPERTGDAPAAPVPGSPSITMATRKELEEMIENLEPHMDDPDVKAQVEVLSAALRASTLDAHDEAGGAEQRSELQDDAVGAGGELPNCSISEDTSEPLVIAAEENMEATPDYIHGGADVGPGGGGGFSPDEERRPKVQDVVPQALLDQYLSMTDPSRAQTVDTEIAKHCAYSLPGVALTLGRQNWHCLRETYETLASDMQWKVRRTLAFSIHELAVILGDQLTAADLVPIFNGFLKDLDEVRIGVLKHLHDFLKLLHIDKRREYLYQLQEFLVTDNSRNWRFRAELAEQLILLLELYSPRDVYDYLRPIALNLCADKVSSVRWISYKLVSEMVKKLHMATPPTFGVELINELVENFGRCPKWSGRQAFVFVCQTVIEDDCLPMDQFAVHLMPHLLTLANDRVPNVRVLLAKTLRQTLLEKEYFLASASCHQEAVEQTIMALQMDRDSDVKYFASIHPSSTKLSEDAMSTASSTY</sequence>
<organism>
    <name type="scientific">Rattus norvegicus</name>
    <name type="common">Rat</name>
    <dbReference type="NCBI Taxonomy" id="10116"/>
    <lineage>
        <taxon>Eukaryota</taxon>
        <taxon>Metazoa</taxon>
        <taxon>Chordata</taxon>
        <taxon>Craniata</taxon>
        <taxon>Vertebrata</taxon>
        <taxon>Euteleostomi</taxon>
        <taxon>Mammalia</taxon>
        <taxon>Eutheria</taxon>
        <taxon>Euarchontoglires</taxon>
        <taxon>Glires</taxon>
        <taxon>Rodentia</taxon>
        <taxon>Myomorpha</taxon>
        <taxon>Muroidea</taxon>
        <taxon>Muridae</taxon>
        <taxon>Murinae</taxon>
        <taxon>Rattus</taxon>
    </lineage>
</organism>
<keyword id="KW-0597">Phosphoprotein</keyword>
<keyword id="KW-1185">Reference proteome</keyword>
<keyword id="KW-0677">Repeat</keyword>
<protein>
    <recommendedName>
        <fullName>Serine/threonine-protein phosphatase 4 regulatory subunit 1</fullName>
    </recommendedName>
</protein>
<gene>
    <name type="primary">Ppp4r1</name>
</gene>
<accession>Q8VI02</accession>
<evidence type="ECO:0000250" key="1">
    <source>
        <dbReference type="UniProtKB" id="Q8TF05"/>
    </source>
</evidence>
<evidence type="ECO:0000256" key="2">
    <source>
        <dbReference type="SAM" id="MobiDB-lite"/>
    </source>
</evidence>
<proteinExistence type="evidence at protein level"/>
<reference key="1">
    <citation type="journal article" date="2001" name="J. Am. Soc. Nephrol.">
        <title>Cloning and characterization of a novel subunit of protein serine/threonine phosphatase 4 from mesangial cells.</title>
        <authorList>
            <person name="Wada T."/>
            <person name="Miyata T."/>
            <person name="Inagi R."/>
            <person name="Nangaku M."/>
            <person name="Wagatsuma M."/>
            <person name="Suzuki D."/>
            <person name="Wadzinski B.E."/>
            <person name="Okubo K."/>
            <person name="Kurokawa K."/>
        </authorList>
    </citation>
    <scope>NUCLEOTIDE SEQUENCE [MRNA]</scope>
</reference>
<reference key="2">
    <citation type="journal article" date="2004" name="Genome Res.">
        <title>The status, quality, and expansion of the NIH full-length cDNA project: the Mammalian Gene Collection (MGC).</title>
        <authorList>
            <consortium name="The MGC Project Team"/>
        </authorList>
    </citation>
    <scope>NUCLEOTIDE SEQUENCE [LARGE SCALE MRNA]</scope>
    <source>
        <tissue>Prostate</tissue>
    </source>
</reference>
<reference key="3">
    <citation type="journal article" date="2012" name="Nat. Commun.">
        <title>Quantitative maps of protein phosphorylation sites across 14 different rat organs and tissues.</title>
        <authorList>
            <person name="Lundby A."/>
            <person name="Secher A."/>
            <person name="Lage K."/>
            <person name="Nordsborg N.B."/>
            <person name="Dmytriyev A."/>
            <person name="Lundby C."/>
            <person name="Olsen J.V."/>
        </authorList>
    </citation>
    <scope>IDENTIFICATION BY MASS SPECTROMETRY [LARGE SCALE ANALYSIS]</scope>
</reference>
<name>PP4R1_RAT</name>
<feature type="chain" id="PRO_0000071529" description="Serine/threonine-protein phosphatase 4 regulatory subunit 1">
    <location>
        <begin position="1"/>
        <end position="951"/>
    </location>
</feature>
<feature type="repeat" description="HEAT 1">
    <location>
        <begin position="26"/>
        <end position="63"/>
    </location>
</feature>
<feature type="repeat" description="HEAT 2">
    <location>
        <begin position="82"/>
        <end position="119"/>
    </location>
</feature>
<feature type="repeat" description="HEAT 3">
    <location>
        <begin position="127"/>
        <end position="164"/>
    </location>
</feature>
<feature type="repeat" description="HEAT 4">
    <location>
        <begin position="168"/>
        <end position="206"/>
    </location>
</feature>
<feature type="repeat" description="HEAT 5">
    <location>
        <begin position="208"/>
        <end position="246"/>
    </location>
</feature>
<feature type="repeat" description="HEAT 6">
    <location>
        <begin position="248"/>
        <end position="285"/>
    </location>
</feature>
<feature type="repeat" description="HEAT 7">
    <location>
        <begin position="287"/>
        <end position="324"/>
    </location>
</feature>
<feature type="repeat" description="HEAT 8">
    <location>
        <begin position="502"/>
        <end position="539"/>
    </location>
</feature>
<feature type="repeat" description="HEAT 9">
    <location>
        <begin position="699"/>
        <end position="735"/>
    </location>
</feature>
<feature type="repeat" description="HEAT 10">
    <location>
        <begin position="777"/>
        <end position="815"/>
    </location>
</feature>
<feature type="repeat" description="HEAT 11">
    <location>
        <begin position="820"/>
        <end position="858"/>
    </location>
</feature>
<feature type="repeat" description="HEAT 12">
    <location>
        <begin position="862"/>
        <end position="899"/>
    </location>
</feature>
<feature type="region of interest" description="Disordered" evidence="2">
    <location>
        <begin position="326"/>
        <end position="395"/>
    </location>
</feature>
<feature type="region of interest" description="Disordered" evidence="2">
    <location>
        <begin position="407"/>
        <end position="501"/>
    </location>
</feature>
<feature type="region of interest" description="Disordered" evidence="2">
    <location>
        <begin position="539"/>
        <end position="569"/>
    </location>
</feature>
<feature type="region of interest" description="Disordered" evidence="2">
    <location>
        <begin position="592"/>
        <end position="612"/>
    </location>
</feature>
<feature type="compositionally biased region" description="Basic and acidic residues" evidence="2">
    <location>
        <begin position="332"/>
        <end position="360"/>
    </location>
</feature>
<feature type="compositionally biased region" description="Basic and acidic residues" evidence="2">
    <location>
        <begin position="464"/>
        <end position="483"/>
    </location>
</feature>
<feature type="compositionally biased region" description="Basic and acidic residues" evidence="2">
    <location>
        <begin position="539"/>
        <end position="551"/>
    </location>
</feature>
<feature type="compositionally biased region" description="Gly residues" evidence="2">
    <location>
        <begin position="594"/>
        <end position="604"/>
    </location>
</feature>
<feature type="modified residue" description="Phosphoserine" evidence="1">
    <location>
        <position position="936"/>
    </location>
</feature>
<comment type="function">
    <text evidence="1">Regulatory subunit of serine/threonine-protein phosphatase 4. May play a role in regulation of cell division in renal glomeruli. The PPP4C-PPP4R1 PP4 complex may play a role in dephosphorylation and regulation of HDAC3. Plays a role in the inhibition of TNF-induced NF-kappa-B activation by regulating the dephosphorylation of TRAF2.</text>
</comment>
<comment type="subunit">
    <text evidence="1">Serine/threonine-protein phosphatase 4 (PP4) occurs in different assemblies of the catalytic and one or more regulatory subunits. Component of the PP4 complex PPP4C-PPP4R1. Interacts with HDAC3.</text>
</comment>
<comment type="induction">
    <text>Up-regulated in anti-Thy1 glomerulonephritis.</text>
</comment>
<dbReference type="EMBL" id="AF332004">
    <property type="protein sequence ID" value="AAL37490.1"/>
    <property type="molecule type" value="mRNA"/>
</dbReference>
<dbReference type="EMBL" id="BC061726">
    <property type="protein sequence ID" value="AAH61726.1"/>
    <property type="molecule type" value="mRNA"/>
</dbReference>
<dbReference type="RefSeq" id="NP_543183.1">
    <property type="nucleotide sequence ID" value="NM_080907.2"/>
</dbReference>
<dbReference type="FunCoup" id="Q8VI02">
    <property type="interactions" value="1278"/>
</dbReference>
<dbReference type="STRING" id="10116.ENSRNOP00000061977"/>
<dbReference type="PhosphoSitePlus" id="Q8VI02"/>
<dbReference type="jPOST" id="Q8VI02"/>
<dbReference type="PaxDb" id="10116-ENSRNOP00000061977"/>
<dbReference type="GeneID" id="140943"/>
<dbReference type="KEGG" id="rno:140943"/>
<dbReference type="UCSC" id="RGD:619798">
    <property type="organism name" value="rat"/>
</dbReference>
<dbReference type="AGR" id="RGD:619798"/>
<dbReference type="CTD" id="9989"/>
<dbReference type="RGD" id="619798">
    <property type="gene designation" value="Ppp4r1"/>
</dbReference>
<dbReference type="eggNOG" id="KOG0211">
    <property type="taxonomic scope" value="Eukaryota"/>
</dbReference>
<dbReference type="InParanoid" id="Q8VI02"/>
<dbReference type="OrthoDB" id="51056at9989"/>
<dbReference type="PhylomeDB" id="Q8VI02"/>
<dbReference type="PRO" id="PR:Q8VI02"/>
<dbReference type="Proteomes" id="UP000002494">
    <property type="component" value="Unplaced"/>
</dbReference>
<dbReference type="GO" id="GO:0005737">
    <property type="term" value="C:cytoplasm"/>
    <property type="evidence" value="ECO:0000318"/>
    <property type="project" value="GO_Central"/>
</dbReference>
<dbReference type="GO" id="GO:0019888">
    <property type="term" value="F:protein phosphatase regulator activity"/>
    <property type="evidence" value="ECO:0000318"/>
    <property type="project" value="GO_Central"/>
</dbReference>
<dbReference type="FunFam" id="1.25.10.10:FF:000156">
    <property type="entry name" value="Serine/threonine-protein phosphatase 4 regulatory subunit 1"/>
    <property type="match status" value="1"/>
</dbReference>
<dbReference type="FunFam" id="1.25.10.10:FF:000161">
    <property type="entry name" value="serine/threonine-protein phosphatase 4 regulatory subunit 1"/>
    <property type="match status" value="1"/>
</dbReference>
<dbReference type="Gene3D" id="1.25.10.10">
    <property type="entry name" value="Leucine-rich Repeat Variant"/>
    <property type="match status" value="2"/>
</dbReference>
<dbReference type="InterPro" id="IPR011989">
    <property type="entry name" value="ARM-like"/>
</dbReference>
<dbReference type="InterPro" id="IPR016024">
    <property type="entry name" value="ARM-type_fold"/>
</dbReference>
<dbReference type="InterPro" id="IPR000357">
    <property type="entry name" value="HEAT"/>
</dbReference>
<dbReference type="InterPro" id="IPR021133">
    <property type="entry name" value="HEAT_type_2"/>
</dbReference>
<dbReference type="InterPro" id="IPR051023">
    <property type="entry name" value="PP2A_Regulatory_Subunit_A"/>
</dbReference>
<dbReference type="PANTHER" id="PTHR10648">
    <property type="entry name" value="SERINE/THREONINE-PROTEIN PHOSPHATASE PP2A 65 KDA REGULATORY SUBUNIT"/>
    <property type="match status" value="1"/>
</dbReference>
<dbReference type="PANTHER" id="PTHR10648:SF8">
    <property type="entry name" value="SERINE_THREONINE-PROTEIN PHOSPHATASE 4 REGULATORY SUBUNIT 1"/>
    <property type="match status" value="1"/>
</dbReference>
<dbReference type="Pfam" id="PF02985">
    <property type="entry name" value="HEAT"/>
    <property type="match status" value="1"/>
</dbReference>
<dbReference type="SUPFAM" id="SSF48371">
    <property type="entry name" value="ARM repeat"/>
    <property type="match status" value="1"/>
</dbReference>
<dbReference type="PROSITE" id="PS50077">
    <property type="entry name" value="HEAT_REPEAT"/>
    <property type="match status" value="2"/>
</dbReference>